<accession>C7J0P3</accession>
<accession>A0A0P0VXC2</accession>
<accession>Q10MK0</accession>
<keyword id="KW-0325">Glycoprotein</keyword>
<keyword id="KW-0328">Glycosyltransferase</keyword>
<keyword id="KW-0333">Golgi apparatus</keyword>
<keyword id="KW-0472">Membrane</keyword>
<keyword id="KW-1185">Reference proteome</keyword>
<keyword id="KW-0735">Signal-anchor</keyword>
<keyword id="KW-0808">Transferase</keyword>
<keyword id="KW-0812">Transmembrane</keyword>
<keyword id="KW-1133">Transmembrane helix</keyword>
<name>GT5_ORYSJ</name>
<sequence>MMEKHGGKVTSDRRAGRRQHGQRCSASDAAPLVVVVILIVAALFLILGPTGSSSFTVPRIRVVFNEPVHVAVAAPPPPPPPAQMQAGANASSEEDSGLPPPRQLTDPPYSLGRTILGYDARRSAWLAAHPEFPARVAPAGRPRVLVVTGSAPARCPDPDGDHLLLRAFKNKVDYCRIHGLDVFYNTAFLDAEMSGFWAKLPLLRMLMVAHPEAELIWWVDSDAVFTDMLFEIPWERYAVHNLVLHGWEAKVFDEKSWIGVNTGSFLIRNCQWSLDLLDAWAPMGPRGPVRDRYGELFAEELSGRPPFEADDQSALIYLLVTQRQRWGDKVFIESSYDLNGFWEGIVDKYEELRRAGRDDGRWPFVTHFVGCKPCRRYADSYPAERCRRGMERAFNFADDQILKLYGFAHESLNTTAVRRVRNETGEPLDAGDEELGRLLHPTFRAARPT</sequence>
<proteinExistence type="evidence at transcript level"/>
<feature type="chain" id="PRO_0000434331" description="Probable glycosyltransferase 5">
    <location>
        <begin position="1"/>
        <end position="449"/>
    </location>
</feature>
<feature type="topological domain" description="Cytoplasmic" evidence="7">
    <location>
        <begin position="1"/>
        <end position="28"/>
    </location>
</feature>
<feature type="transmembrane region" description="Helical; Signal-anchor for type II membrane protein" evidence="2">
    <location>
        <begin position="29"/>
        <end position="49"/>
    </location>
</feature>
<feature type="topological domain" description="Lumenal" evidence="7">
    <location>
        <begin position="50"/>
        <end position="449"/>
    </location>
</feature>
<feature type="region of interest" description="Disordered" evidence="4">
    <location>
        <begin position="1"/>
        <end position="24"/>
    </location>
</feature>
<feature type="region of interest" description="Disordered" evidence="4">
    <location>
        <begin position="74"/>
        <end position="109"/>
    </location>
</feature>
<feature type="compositionally biased region" description="Basic and acidic residues" evidence="4">
    <location>
        <begin position="1"/>
        <end position="14"/>
    </location>
</feature>
<feature type="glycosylation site" description="N-linked (GlcNAc...) asparagine" evidence="3">
    <location>
        <position position="89"/>
    </location>
</feature>
<feature type="glycosylation site" description="N-linked (GlcNAc...) asparagine" evidence="3">
    <location>
        <position position="413"/>
    </location>
</feature>
<feature type="glycosylation site" description="N-linked (GlcNAc...) asparagine" evidence="3">
    <location>
        <position position="422"/>
    </location>
</feature>
<gene>
    <name evidence="6" type="primary">GT5</name>
    <name evidence="9" type="ordered locus">Os03g0306100</name>
    <name evidence="8" type="ordered locus">LOC_Os03g19330</name>
    <name evidence="10" type="ORF">OsJ_10556</name>
</gene>
<comment type="function">
    <text evidence="1">Probable glycosyltransferase that may be involved in the biosynthesis of xyloglucan.</text>
</comment>
<comment type="subcellular location">
    <subcellularLocation>
        <location evidence="7">Golgi apparatus membrane</location>
        <topology evidence="7">Single-pass type II membrane protein</topology>
    </subcellularLocation>
</comment>
<comment type="induction">
    <text evidence="5">Down-regulated by treatment with atrazine.</text>
</comment>
<comment type="similarity">
    <text evidence="7">Belongs to the glycosyltransferase 34 family.</text>
</comment>
<comment type="sequence caution" evidence="7">
    <conflict type="erroneous initiation">
        <sequence resource="EMBL-CDS" id="ABF95527"/>
    </conflict>
    <text>Truncated N-terminus.</text>
</comment>
<comment type="sequence caution" evidence="7">
    <conflict type="erroneous initiation">
        <sequence resource="EMBL-CDS" id="EAZ26652"/>
    </conflict>
    <text>Truncated N-terminus.</text>
</comment>
<dbReference type="EC" id="2.4.-.-" evidence="7"/>
<dbReference type="EMBL" id="DP000009">
    <property type="protein sequence ID" value="ABF95527.1"/>
    <property type="status" value="ALT_INIT"/>
    <property type="molecule type" value="Genomic_DNA"/>
</dbReference>
<dbReference type="EMBL" id="AP008209">
    <property type="protein sequence ID" value="BAH92117.1"/>
    <property type="molecule type" value="Genomic_DNA"/>
</dbReference>
<dbReference type="EMBL" id="AP014959">
    <property type="protein sequence ID" value="BAS83811.1"/>
    <property type="molecule type" value="Genomic_DNA"/>
</dbReference>
<dbReference type="EMBL" id="CM000140">
    <property type="protein sequence ID" value="EAZ26652.1"/>
    <property type="status" value="ALT_INIT"/>
    <property type="molecule type" value="Genomic_DNA"/>
</dbReference>
<dbReference type="SMR" id="C7J0P3"/>
<dbReference type="FunCoup" id="C7J0P3">
    <property type="interactions" value="3"/>
</dbReference>
<dbReference type="STRING" id="39947.C7J0P3"/>
<dbReference type="GlyCosmos" id="C7J0P3">
    <property type="glycosylation" value="3 sites, No reported glycans"/>
</dbReference>
<dbReference type="PaxDb" id="39947-C7J0P3"/>
<dbReference type="EnsemblPlants" id="Os03t0306100-00">
    <property type="protein sequence ID" value="Os03t0306100-00"/>
    <property type="gene ID" value="Os03g0306100"/>
</dbReference>
<dbReference type="GeneID" id="9269659"/>
<dbReference type="Gramene" id="Os03t0306100-00">
    <property type="protein sequence ID" value="Os03t0306100-00"/>
    <property type="gene ID" value="Os03g0306100"/>
</dbReference>
<dbReference type="KEGG" id="dosa:Os03g0306100"/>
<dbReference type="KEGG" id="osa:9269659"/>
<dbReference type="eggNOG" id="KOG4748">
    <property type="taxonomic scope" value="Eukaryota"/>
</dbReference>
<dbReference type="HOGENOM" id="CLU_034328_1_1_1"/>
<dbReference type="InParanoid" id="C7J0P3"/>
<dbReference type="OMA" id="HYRRCAP"/>
<dbReference type="OrthoDB" id="205108at2759"/>
<dbReference type="PlantReactome" id="R-OSA-5655101">
    <property type="pathway name" value="Xyloglucan biosynthesis"/>
</dbReference>
<dbReference type="Proteomes" id="UP000000763">
    <property type="component" value="Chromosome 3"/>
</dbReference>
<dbReference type="Proteomes" id="UP000007752">
    <property type="component" value="Chromosome 3"/>
</dbReference>
<dbReference type="Proteomes" id="UP000059680">
    <property type="component" value="Chromosome 3"/>
</dbReference>
<dbReference type="GO" id="GO:0000139">
    <property type="term" value="C:Golgi membrane"/>
    <property type="evidence" value="ECO:0007669"/>
    <property type="project" value="UniProtKB-SubCell"/>
</dbReference>
<dbReference type="GO" id="GO:0016758">
    <property type="term" value="F:hexosyltransferase activity"/>
    <property type="evidence" value="ECO:0000318"/>
    <property type="project" value="GO_Central"/>
</dbReference>
<dbReference type="GO" id="GO:0035252">
    <property type="term" value="F:UDP-xylosyltransferase activity"/>
    <property type="evidence" value="ECO:0000318"/>
    <property type="project" value="GO_Central"/>
</dbReference>
<dbReference type="GO" id="GO:0033843">
    <property type="term" value="F:xyloglucan 6-xylosyltransferase activity"/>
    <property type="evidence" value="ECO:0000318"/>
    <property type="project" value="GO_Central"/>
</dbReference>
<dbReference type="GO" id="GO:0009969">
    <property type="term" value="P:xyloglucan biosynthetic process"/>
    <property type="evidence" value="ECO:0000318"/>
    <property type="project" value="GO_Central"/>
</dbReference>
<dbReference type="FunFam" id="3.90.550.10:FF:000101">
    <property type="entry name" value="Probable glycosyltransferase 5"/>
    <property type="match status" value="1"/>
</dbReference>
<dbReference type="Gene3D" id="3.90.550.10">
    <property type="entry name" value="Spore Coat Polysaccharide Biosynthesis Protein SpsA, Chain A"/>
    <property type="match status" value="1"/>
</dbReference>
<dbReference type="InterPro" id="IPR008630">
    <property type="entry name" value="Glyco_trans_34"/>
</dbReference>
<dbReference type="InterPro" id="IPR029044">
    <property type="entry name" value="Nucleotide-diphossugar_trans"/>
</dbReference>
<dbReference type="PANTHER" id="PTHR31311:SF9">
    <property type="entry name" value="GLYCOSYLTRANSFERASE 5-RELATED"/>
    <property type="match status" value="1"/>
</dbReference>
<dbReference type="PANTHER" id="PTHR31311">
    <property type="entry name" value="XYLOGLUCAN 6-XYLOSYLTRANSFERASE 5-RELATED-RELATED"/>
    <property type="match status" value="1"/>
</dbReference>
<dbReference type="Pfam" id="PF05637">
    <property type="entry name" value="Glyco_transf_34"/>
    <property type="match status" value="1"/>
</dbReference>
<protein>
    <recommendedName>
        <fullName evidence="7">Probable glycosyltransferase 5</fullName>
        <shortName evidence="6">OsGT5</shortName>
        <ecNumber evidence="7">2.4.-.-</ecNumber>
    </recommendedName>
</protein>
<evidence type="ECO:0000250" key="1">
    <source>
        <dbReference type="UniProtKB" id="Q10MQ0"/>
    </source>
</evidence>
<evidence type="ECO:0000255" key="2"/>
<evidence type="ECO:0000255" key="3">
    <source>
        <dbReference type="PROSITE-ProRule" id="PRU00498"/>
    </source>
</evidence>
<evidence type="ECO:0000256" key="4">
    <source>
        <dbReference type="SAM" id="MobiDB-lite"/>
    </source>
</evidence>
<evidence type="ECO:0000269" key="5">
    <source>
    </source>
</evidence>
<evidence type="ECO:0000303" key="6">
    <source>
    </source>
</evidence>
<evidence type="ECO:0000305" key="7"/>
<evidence type="ECO:0000312" key="8">
    <source>
        <dbReference type="EMBL" id="ABF95527.1"/>
    </source>
</evidence>
<evidence type="ECO:0000312" key="9">
    <source>
        <dbReference type="EMBL" id="BAH92117.1"/>
    </source>
</evidence>
<evidence type="ECO:0000312" key="10">
    <source>
        <dbReference type="EMBL" id="EAZ26652.1"/>
    </source>
</evidence>
<organism>
    <name type="scientific">Oryza sativa subsp. japonica</name>
    <name type="common">Rice</name>
    <dbReference type="NCBI Taxonomy" id="39947"/>
    <lineage>
        <taxon>Eukaryota</taxon>
        <taxon>Viridiplantae</taxon>
        <taxon>Streptophyta</taxon>
        <taxon>Embryophyta</taxon>
        <taxon>Tracheophyta</taxon>
        <taxon>Spermatophyta</taxon>
        <taxon>Magnoliopsida</taxon>
        <taxon>Liliopsida</taxon>
        <taxon>Poales</taxon>
        <taxon>Poaceae</taxon>
        <taxon>BOP clade</taxon>
        <taxon>Oryzoideae</taxon>
        <taxon>Oryzeae</taxon>
        <taxon>Oryzinae</taxon>
        <taxon>Oryza</taxon>
        <taxon>Oryza sativa</taxon>
    </lineage>
</organism>
<reference key="1">
    <citation type="journal article" date="2005" name="Genome Res.">
        <title>Sequence, annotation, and analysis of synteny between rice chromosome 3 and diverged grass species.</title>
        <authorList>
            <consortium name="The rice chromosome 3 sequencing consortium"/>
            <person name="Buell C.R."/>
            <person name="Yuan Q."/>
            <person name="Ouyang S."/>
            <person name="Liu J."/>
            <person name="Zhu W."/>
            <person name="Wang A."/>
            <person name="Maiti R."/>
            <person name="Haas B."/>
            <person name="Wortman J."/>
            <person name="Pertea M."/>
            <person name="Jones K.M."/>
            <person name="Kim M."/>
            <person name="Overton L."/>
            <person name="Tsitrin T."/>
            <person name="Fadrosh D."/>
            <person name="Bera J."/>
            <person name="Weaver B."/>
            <person name="Jin S."/>
            <person name="Johri S."/>
            <person name="Reardon M."/>
            <person name="Webb K."/>
            <person name="Hill J."/>
            <person name="Moffat K."/>
            <person name="Tallon L."/>
            <person name="Van Aken S."/>
            <person name="Lewis M."/>
            <person name="Utterback T."/>
            <person name="Feldblyum T."/>
            <person name="Zismann V."/>
            <person name="Iobst S."/>
            <person name="Hsiao J."/>
            <person name="de Vazeille A.R."/>
            <person name="Salzberg S.L."/>
            <person name="White O."/>
            <person name="Fraser C.M."/>
            <person name="Yu Y."/>
            <person name="Kim H."/>
            <person name="Rambo T."/>
            <person name="Currie J."/>
            <person name="Collura K."/>
            <person name="Kernodle-Thompson S."/>
            <person name="Wei F."/>
            <person name="Kudrna K."/>
            <person name="Ammiraju J.S.S."/>
            <person name="Luo M."/>
            <person name="Goicoechea J.L."/>
            <person name="Wing R.A."/>
            <person name="Henry D."/>
            <person name="Oates R."/>
            <person name="Palmer M."/>
            <person name="Pries G."/>
            <person name="Saski C."/>
            <person name="Simmons J."/>
            <person name="Soderlund C."/>
            <person name="Nelson W."/>
            <person name="de la Bastide M."/>
            <person name="Spiegel L."/>
            <person name="Nascimento L."/>
            <person name="Huang E."/>
            <person name="Preston R."/>
            <person name="Zutavern T."/>
            <person name="Palmer L."/>
            <person name="O'Shaughnessy A."/>
            <person name="Dike S."/>
            <person name="McCombie W.R."/>
            <person name="Minx P."/>
            <person name="Cordum H."/>
            <person name="Wilson R."/>
            <person name="Jin W."/>
            <person name="Lee H.R."/>
            <person name="Jiang J."/>
            <person name="Jackson S."/>
        </authorList>
    </citation>
    <scope>NUCLEOTIDE SEQUENCE [LARGE SCALE GENOMIC DNA]</scope>
    <source>
        <strain>cv. Nipponbare</strain>
    </source>
</reference>
<reference key="2">
    <citation type="journal article" date="2005" name="Nature">
        <title>The map-based sequence of the rice genome.</title>
        <authorList>
            <consortium name="International rice genome sequencing project (IRGSP)"/>
        </authorList>
    </citation>
    <scope>NUCLEOTIDE SEQUENCE [LARGE SCALE GENOMIC DNA]</scope>
    <source>
        <strain>cv. Nipponbare</strain>
    </source>
</reference>
<reference key="3">
    <citation type="journal article" date="2008" name="Nucleic Acids Res.">
        <title>The rice annotation project database (RAP-DB): 2008 update.</title>
        <authorList>
            <consortium name="The rice annotation project (RAP)"/>
        </authorList>
    </citation>
    <scope>GENOME REANNOTATION</scope>
    <source>
        <strain>cv. Nipponbare</strain>
    </source>
</reference>
<reference key="4">
    <citation type="journal article" date="2013" name="Rice">
        <title>Improvement of the Oryza sativa Nipponbare reference genome using next generation sequence and optical map data.</title>
        <authorList>
            <person name="Kawahara Y."/>
            <person name="de la Bastide M."/>
            <person name="Hamilton J.P."/>
            <person name="Kanamori H."/>
            <person name="McCombie W.R."/>
            <person name="Ouyang S."/>
            <person name="Schwartz D.C."/>
            <person name="Tanaka T."/>
            <person name="Wu J."/>
            <person name="Zhou S."/>
            <person name="Childs K.L."/>
            <person name="Davidson R.M."/>
            <person name="Lin H."/>
            <person name="Quesada-Ocampo L."/>
            <person name="Vaillancourt B."/>
            <person name="Sakai H."/>
            <person name="Lee S.S."/>
            <person name="Kim J."/>
            <person name="Numa H."/>
            <person name="Itoh T."/>
            <person name="Buell C.R."/>
            <person name="Matsumoto T."/>
        </authorList>
    </citation>
    <scope>GENOME REANNOTATION</scope>
    <source>
        <strain>cv. Nipponbare</strain>
    </source>
</reference>
<reference key="5">
    <citation type="journal article" date="2005" name="PLoS Biol.">
        <title>The genomes of Oryza sativa: a history of duplications.</title>
        <authorList>
            <person name="Yu J."/>
            <person name="Wang J."/>
            <person name="Lin W."/>
            <person name="Li S."/>
            <person name="Li H."/>
            <person name="Zhou J."/>
            <person name="Ni P."/>
            <person name="Dong W."/>
            <person name="Hu S."/>
            <person name="Zeng C."/>
            <person name="Zhang J."/>
            <person name="Zhang Y."/>
            <person name="Li R."/>
            <person name="Xu Z."/>
            <person name="Li S."/>
            <person name="Li X."/>
            <person name="Zheng H."/>
            <person name="Cong L."/>
            <person name="Lin L."/>
            <person name="Yin J."/>
            <person name="Geng J."/>
            <person name="Li G."/>
            <person name="Shi J."/>
            <person name="Liu J."/>
            <person name="Lv H."/>
            <person name="Li J."/>
            <person name="Wang J."/>
            <person name="Deng Y."/>
            <person name="Ran L."/>
            <person name="Shi X."/>
            <person name="Wang X."/>
            <person name="Wu Q."/>
            <person name="Li C."/>
            <person name="Ren X."/>
            <person name="Wang J."/>
            <person name="Wang X."/>
            <person name="Li D."/>
            <person name="Liu D."/>
            <person name="Zhang X."/>
            <person name="Ji Z."/>
            <person name="Zhao W."/>
            <person name="Sun Y."/>
            <person name="Zhang Z."/>
            <person name="Bao J."/>
            <person name="Han Y."/>
            <person name="Dong L."/>
            <person name="Ji J."/>
            <person name="Chen P."/>
            <person name="Wu S."/>
            <person name="Liu J."/>
            <person name="Xiao Y."/>
            <person name="Bu D."/>
            <person name="Tan J."/>
            <person name="Yang L."/>
            <person name="Ye C."/>
            <person name="Zhang J."/>
            <person name="Xu J."/>
            <person name="Zhou Y."/>
            <person name="Yu Y."/>
            <person name="Zhang B."/>
            <person name="Zhuang S."/>
            <person name="Wei H."/>
            <person name="Liu B."/>
            <person name="Lei M."/>
            <person name="Yu H."/>
            <person name="Li Y."/>
            <person name="Xu H."/>
            <person name="Wei S."/>
            <person name="He X."/>
            <person name="Fang L."/>
            <person name="Zhang Z."/>
            <person name="Zhang Y."/>
            <person name="Huang X."/>
            <person name="Su Z."/>
            <person name="Tong W."/>
            <person name="Li J."/>
            <person name="Tong Z."/>
            <person name="Li S."/>
            <person name="Ye J."/>
            <person name="Wang L."/>
            <person name="Fang L."/>
            <person name="Lei T."/>
            <person name="Chen C.-S."/>
            <person name="Chen H.-C."/>
            <person name="Xu Z."/>
            <person name="Li H."/>
            <person name="Huang H."/>
            <person name="Zhang F."/>
            <person name="Xu H."/>
            <person name="Li N."/>
            <person name="Zhao C."/>
            <person name="Li S."/>
            <person name="Dong L."/>
            <person name="Huang Y."/>
            <person name="Li L."/>
            <person name="Xi Y."/>
            <person name="Qi Q."/>
            <person name="Li W."/>
            <person name="Zhang B."/>
            <person name="Hu W."/>
            <person name="Zhang Y."/>
            <person name="Tian X."/>
            <person name="Jiao Y."/>
            <person name="Liang X."/>
            <person name="Jin J."/>
            <person name="Gao L."/>
            <person name="Zheng W."/>
            <person name="Hao B."/>
            <person name="Liu S.-M."/>
            <person name="Wang W."/>
            <person name="Yuan L."/>
            <person name="Cao M."/>
            <person name="McDermott J."/>
            <person name="Samudrala R."/>
            <person name="Wang J."/>
            <person name="Wong G.K.-S."/>
            <person name="Yang H."/>
        </authorList>
    </citation>
    <scope>NUCLEOTIDE SEQUENCE [LARGE SCALE GENOMIC DNA]</scope>
    <source>
        <strain>cv. Nipponbare</strain>
    </source>
</reference>
<reference key="6">
    <citation type="journal article" date="2013" name="Gene">
        <title>A collection of glycosyltransferases from rice (Oryza sativa) exposed to atrazine.</title>
        <authorList>
            <person name="Lu Y.C."/>
            <person name="Yang S.N."/>
            <person name="Zhang J.J."/>
            <person name="Zhang J.J."/>
            <person name="Tan L.R."/>
            <person name="Yang H."/>
        </authorList>
    </citation>
    <scope>INDUCTION</scope>
</reference>
<reference key="7">
    <citation type="journal article" date="2014" name="J. Exp. Bot.">
        <title>Mutation in xyloglucan 6-xylosytransferase results in abnormal root hair development in Oryza sativa.</title>
        <authorList>
            <person name="Wang C."/>
            <person name="Li S."/>
            <person name="Ng S."/>
            <person name="Zhang B."/>
            <person name="Zhou Y."/>
            <person name="Whelan J."/>
            <person name="Wu P."/>
            <person name="Shou H."/>
        </authorList>
    </citation>
    <scope>NOMENCLATURE</scope>
</reference>